<dbReference type="EMBL" id="AE005174">
    <property type="protein sequence ID" value="AAG59170.1"/>
    <property type="molecule type" value="Genomic_DNA"/>
</dbReference>
<dbReference type="EMBL" id="BA000007">
    <property type="protein sequence ID" value="BAB38320.1"/>
    <property type="molecule type" value="Genomic_DNA"/>
</dbReference>
<dbReference type="PIR" id="A98241">
    <property type="entry name" value="A98241"/>
</dbReference>
<dbReference type="PIR" id="F86088">
    <property type="entry name" value="F86088"/>
</dbReference>
<dbReference type="RefSeq" id="NP_312924.1">
    <property type="nucleotide sequence ID" value="NC_002695.1"/>
</dbReference>
<dbReference type="RefSeq" id="WP_000591342.1">
    <property type="nucleotide sequence ID" value="NZ_VOAI01000032.1"/>
</dbReference>
<dbReference type="SMR" id="Q8X714"/>
<dbReference type="STRING" id="155864.Z5527"/>
<dbReference type="GeneID" id="914972"/>
<dbReference type="KEGG" id="ece:Z5527"/>
<dbReference type="KEGG" id="ecs:ECs_4897"/>
<dbReference type="PATRIC" id="fig|386585.9.peg.5121"/>
<dbReference type="eggNOG" id="COG4206">
    <property type="taxonomic scope" value="Bacteria"/>
</dbReference>
<dbReference type="HOGENOM" id="CLU_008287_18_5_6"/>
<dbReference type="OMA" id="SYELQWR"/>
<dbReference type="Proteomes" id="UP000000558">
    <property type="component" value="Chromosome"/>
</dbReference>
<dbReference type="Proteomes" id="UP000002519">
    <property type="component" value="Chromosome"/>
</dbReference>
<dbReference type="GO" id="GO:0009279">
    <property type="term" value="C:cell outer membrane"/>
    <property type="evidence" value="ECO:0007669"/>
    <property type="project" value="UniProtKB-SubCell"/>
</dbReference>
<dbReference type="GO" id="GO:0046930">
    <property type="term" value="C:pore complex"/>
    <property type="evidence" value="ECO:0007669"/>
    <property type="project" value="UniProtKB-KW"/>
</dbReference>
<dbReference type="GO" id="GO:0015420">
    <property type="term" value="F:ABC-type vitamin B12 transporter activity"/>
    <property type="evidence" value="ECO:0007669"/>
    <property type="project" value="InterPro"/>
</dbReference>
<dbReference type="GO" id="GO:0046872">
    <property type="term" value="F:metal ion binding"/>
    <property type="evidence" value="ECO:0007669"/>
    <property type="project" value="UniProtKB-KW"/>
</dbReference>
<dbReference type="GO" id="GO:0015288">
    <property type="term" value="F:porin activity"/>
    <property type="evidence" value="ECO:0007669"/>
    <property type="project" value="UniProtKB-KW"/>
</dbReference>
<dbReference type="GO" id="GO:0006811">
    <property type="term" value="P:monoatomic ion transport"/>
    <property type="evidence" value="ECO:0007669"/>
    <property type="project" value="UniProtKB-KW"/>
</dbReference>
<dbReference type="CDD" id="cd01347">
    <property type="entry name" value="ligand_gated_channel"/>
    <property type="match status" value="1"/>
</dbReference>
<dbReference type="FunFam" id="2.170.130.10:FF:000002">
    <property type="entry name" value="Vitamin B12 transporter BtuB"/>
    <property type="match status" value="1"/>
</dbReference>
<dbReference type="FunFam" id="2.40.170.20:FF:000001">
    <property type="entry name" value="Vitamin B12 transporter BtuB"/>
    <property type="match status" value="1"/>
</dbReference>
<dbReference type="Gene3D" id="2.40.170.20">
    <property type="entry name" value="TonB-dependent receptor, beta-barrel domain"/>
    <property type="match status" value="1"/>
</dbReference>
<dbReference type="Gene3D" id="2.170.130.10">
    <property type="entry name" value="TonB-dependent receptor, plug domain"/>
    <property type="match status" value="1"/>
</dbReference>
<dbReference type="HAMAP" id="MF_01531">
    <property type="entry name" value="BtuB"/>
    <property type="match status" value="1"/>
</dbReference>
<dbReference type="InterPro" id="IPR010101">
    <property type="entry name" value="B12_transptr_BtuB"/>
</dbReference>
<dbReference type="InterPro" id="IPR012910">
    <property type="entry name" value="Plug_dom"/>
</dbReference>
<dbReference type="InterPro" id="IPR037066">
    <property type="entry name" value="Plug_dom_sf"/>
</dbReference>
<dbReference type="InterPro" id="IPR039426">
    <property type="entry name" value="TonB-dep_rcpt-like"/>
</dbReference>
<dbReference type="InterPro" id="IPR000531">
    <property type="entry name" value="TonB-dep_rcpt_b-brl"/>
</dbReference>
<dbReference type="InterPro" id="IPR010916">
    <property type="entry name" value="TonB_box_CS"/>
</dbReference>
<dbReference type="InterPro" id="IPR036942">
    <property type="entry name" value="TonB_rcpt_b-brl_sf"/>
</dbReference>
<dbReference type="InterPro" id="IPR010917">
    <property type="entry name" value="TonB_rcpt_CS"/>
</dbReference>
<dbReference type="NCBIfam" id="NF007926">
    <property type="entry name" value="PRK10641.1"/>
    <property type="match status" value="1"/>
</dbReference>
<dbReference type="NCBIfam" id="TIGR01779">
    <property type="entry name" value="TonB-B12"/>
    <property type="match status" value="1"/>
</dbReference>
<dbReference type="PANTHER" id="PTHR30069:SF53">
    <property type="entry name" value="COLICIN I RECEPTOR-RELATED"/>
    <property type="match status" value="1"/>
</dbReference>
<dbReference type="PANTHER" id="PTHR30069">
    <property type="entry name" value="TONB-DEPENDENT OUTER MEMBRANE RECEPTOR"/>
    <property type="match status" value="1"/>
</dbReference>
<dbReference type="Pfam" id="PF07715">
    <property type="entry name" value="Plug"/>
    <property type="match status" value="1"/>
</dbReference>
<dbReference type="Pfam" id="PF00593">
    <property type="entry name" value="TonB_dep_Rec_b-barrel"/>
    <property type="match status" value="1"/>
</dbReference>
<dbReference type="SUPFAM" id="SSF56935">
    <property type="entry name" value="Porins"/>
    <property type="match status" value="1"/>
</dbReference>
<dbReference type="PROSITE" id="PS00430">
    <property type="entry name" value="TONB_DEPENDENT_REC_1"/>
    <property type="match status" value="1"/>
</dbReference>
<dbReference type="PROSITE" id="PS01156">
    <property type="entry name" value="TONB_DEPENDENT_REC_2"/>
    <property type="match status" value="1"/>
</dbReference>
<dbReference type="PROSITE" id="PS52016">
    <property type="entry name" value="TONB_DEPENDENT_REC_3"/>
    <property type="match status" value="1"/>
</dbReference>
<accession>Q8X714</accession>
<accession>Q7A963</accession>
<organism>
    <name type="scientific">Escherichia coli O157:H7</name>
    <dbReference type="NCBI Taxonomy" id="83334"/>
    <lineage>
        <taxon>Bacteria</taxon>
        <taxon>Pseudomonadati</taxon>
        <taxon>Pseudomonadota</taxon>
        <taxon>Gammaproteobacteria</taxon>
        <taxon>Enterobacterales</taxon>
        <taxon>Enterobacteriaceae</taxon>
        <taxon>Escherichia</taxon>
    </lineage>
</organism>
<gene>
    <name evidence="1" type="primary">btuB</name>
    <name type="ordered locus">Z5527</name>
    <name type="ordered locus">ECs4897</name>
</gene>
<protein>
    <recommendedName>
        <fullName evidence="1">Vitamin B12 transporter BtuB</fullName>
    </recommendedName>
    <alternativeName>
        <fullName evidence="1">Cobalamin receptor</fullName>
    </alternativeName>
    <alternativeName>
        <fullName evidence="1">Outer membrane cobalamin translocator</fullName>
    </alternativeName>
</protein>
<sequence>MIKKASLLTACSVTAFSAWAQDTSPDTLVVTANRFEQPRSTVLAPTTVVTRQDIDRWQSTSVNDVLRRLPGVDITQNGGSGQLSSIFIRGTNASHVLVLIDGVRLNLAGGSGSADLSQFPIALVQRVEYIRGPRSAVYGSDAIGGVVNIITTRDEPGTEISAGWGSNSYQNYDVSTQQQLGDKTRVTLLGDYAHTHGYDVVAYGNTGTQAQPDNDGFLSKTLYGALEHNFTDAWSGFVRGYGYDNRTNYDAYYSPGSPLVDTRKLYSQSWDAGLRYNGELIKSQLITSYSHSKDYNYDPHYGRYDSSATLDEMKQYTVQWANNIIIGHGNVGAGVDWQKQSTAPGTAYVKDGYDQRNTGIYLTGLQQVGDFTFEGAARSDDNSQFGRHGTWQTSAGWEFIEGYRFIASYGTSYKAPNLGQLYGFYGNPNLDPEKSKQWEGAFEGLTAGVNWRISGYRNDVSDLIDYDDHTLKYYNEGKARIKGVEATANFDTGPLTHTVSYDYVDARNAITDTPLLRRAKQQVKYQLDWQLYDFDWGITYQYLGTRYDKDYSSYPYQTVKMGGVSLWDLAVAYPVTSHLTVRGKIANLFDKDYETVYGYQTAGREYTLSGSYTF</sequence>
<evidence type="ECO:0000255" key="1">
    <source>
        <dbReference type="HAMAP-Rule" id="MF_01531"/>
    </source>
</evidence>
<evidence type="ECO:0000255" key="2">
    <source>
        <dbReference type="PROSITE-ProRule" id="PRU01360"/>
    </source>
</evidence>
<proteinExistence type="inferred from homology"/>
<name>BTUB_ECO57</name>
<comment type="function">
    <text evidence="1">Involved in the active translocation of vitamin B12 (cyanocobalamin) across the outer membrane to the periplasmic space. It derives its energy for transport by interacting with the trans-periplasmic membrane protein TonB.</text>
</comment>
<comment type="subcellular location">
    <subcellularLocation>
        <location evidence="1">Cell outer membrane</location>
        <topology evidence="1">Multi-pass membrane protein</topology>
    </subcellularLocation>
</comment>
<comment type="similarity">
    <text evidence="1">Belongs to the TonB-dependent receptor family. BtuB (TC 1.B.14.3.1) subfamily.</text>
</comment>
<reference key="1">
    <citation type="journal article" date="2001" name="Nature">
        <title>Genome sequence of enterohaemorrhagic Escherichia coli O157:H7.</title>
        <authorList>
            <person name="Perna N.T."/>
            <person name="Plunkett G. III"/>
            <person name="Burland V."/>
            <person name="Mau B."/>
            <person name="Glasner J.D."/>
            <person name="Rose D.J."/>
            <person name="Mayhew G.F."/>
            <person name="Evans P.S."/>
            <person name="Gregor J."/>
            <person name="Kirkpatrick H.A."/>
            <person name="Posfai G."/>
            <person name="Hackett J."/>
            <person name="Klink S."/>
            <person name="Boutin A."/>
            <person name="Shao Y."/>
            <person name="Miller L."/>
            <person name="Grotbeck E.J."/>
            <person name="Davis N.W."/>
            <person name="Lim A."/>
            <person name="Dimalanta E.T."/>
            <person name="Potamousis K."/>
            <person name="Apodaca J."/>
            <person name="Anantharaman T.S."/>
            <person name="Lin J."/>
            <person name="Yen G."/>
            <person name="Schwartz D.C."/>
            <person name="Welch R.A."/>
            <person name="Blattner F.R."/>
        </authorList>
    </citation>
    <scope>NUCLEOTIDE SEQUENCE [LARGE SCALE GENOMIC DNA]</scope>
    <source>
        <strain>O157:H7 / EDL933 / ATCC 700927 / EHEC</strain>
    </source>
</reference>
<reference key="2">
    <citation type="journal article" date="2001" name="DNA Res.">
        <title>Complete genome sequence of enterohemorrhagic Escherichia coli O157:H7 and genomic comparison with a laboratory strain K-12.</title>
        <authorList>
            <person name="Hayashi T."/>
            <person name="Makino K."/>
            <person name="Ohnishi M."/>
            <person name="Kurokawa K."/>
            <person name="Ishii K."/>
            <person name="Yokoyama K."/>
            <person name="Han C.-G."/>
            <person name="Ohtsubo E."/>
            <person name="Nakayama K."/>
            <person name="Murata T."/>
            <person name="Tanaka M."/>
            <person name="Tobe T."/>
            <person name="Iida T."/>
            <person name="Takami H."/>
            <person name="Honda T."/>
            <person name="Sasakawa C."/>
            <person name="Ogasawara N."/>
            <person name="Yasunaga T."/>
            <person name="Kuhara S."/>
            <person name="Shiba T."/>
            <person name="Hattori M."/>
            <person name="Shinagawa H."/>
        </authorList>
    </citation>
    <scope>NUCLEOTIDE SEQUENCE [LARGE SCALE GENOMIC DNA]</scope>
    <source>
        <strain>O157:H7 / Sakai / RIMD 0509952 / EHEC</strain>
    </source>
</reference>
<feature type="signal peptide" evidence="1">
    <location>
        <begin position="1"/>
        <end position="20"/>
    </location>
</feature>
<feature type="chain" id="PRO_0000003482" description="Vitamin B12 transporter BtuB">
    <location>
        <begin position="21"/>
        <end position="614"/>
    </location>
</feature>
<feature type="transmembrane region" description="Beta stranded" evidence="1">
    <location>
        <begin position="158"/>
        <end position="165"/>
    </location>
</feature>
<feature type="transmembrane region" description="Beta stranded" evidence="1">
    <location>
        <begin position="169"/>
        <end position="178"/>
    </location>
</feature>
<feature type="transmembrane region" description="Beta stranded" evidence="1">
    <location>
        <begin position="184"/>
        <end position="195"/>
    </location>
</feature>
<feature type="transmembrane region" description="Beta stranded" evidence="1">
    <location>
        <begin position="217"/>
        <end position="227"/>
    </location>
</feature>
<feature type="transmembrane region" description="Beta stranded" evidence="1">
    <location>
        <begin position="232"/>
        <end position="248"/>
    </location>
</feature>
<feature type="transmembrane region" description="Beta stranded" evidence="1">
    <location>
        <begin position="263"/>
        <end position="277"/>
    </location>
</feature>
<feature type="transmembrane region" description="Beta stranded" evidence="1">
    <location>
        <begin position="279"/>
        <end position="296"/>
    </location>
</feature>
<feature type="transmembrane region" description="Beta stranded" evidence="1">
    <location>
        <begin position="309"/>
        <end position="325"/>
    </location>
</feature>
<feature type="transmembrane region" description="Beta stranded" evidence="1">
    <location>
        <begin position="328"/>
        <end position="337"/>
    </location>
</feature>
<feature type="transmembrane region" description="Beta stranded" evidence="1">
    <location>
        <begin position="353"/>
        <end position="369"/>
    </location>
</feature>
<feature type="transmembrane region" description="Beta stranded" evidence="1">
    <location>
        <begin position="371"/>
        <end position="381"/>
    </location>
</feature>
<feature type="transmembrane region" description="Beta stranded" evidence="1">
    <location>
        <begin position="385"/>
        <end position="400"/>
    </location>
</feature>
<feature type="transmembrane region" description="Beta stranded" evidence="1">
    <location>
        <begin position="403"/>
        <end position="417"/>
    </location>
</feature>
<feature type="transmembrane region" description="Beta stranded" evidence="1">
    <location>
        <begin position="434"/>
        <end position="443"/>
    </location>
</feature>
<feature type="transmembrane region" description="Beta stranded" evidence="1">
    <location>
        <begin position="449"/>
        <end position="458"/>
    </location>
</feature>
<feature type="transmembrane region" description="Beta stranded" evidence="1">
    <location>
        <begin position="473"/>
        <end position="490"/>
    </location>
</feature>
<feature type="transmembrane region" description="Beta stranded" evidence="1">
    <location>
        <begin position="494"/>
        <end position="509"/>
    </location>
</feature>
<feature type="transmembrane region" description="Beta stranded" evidence="1">
    <location>
        <begin position="517"/>
        <end position="529"/>
    </location>
</feature>
<feature type="transmembrane region" description="Beta stranded" evidence="1">
    <location>
        <begin position="535"/>
        <end position="550"/>
    </location>
</feature>
<feature type="transmembrane region" description="Beta stranded" evidence="1">
    <location>
        <begin position="558"/>
        <end position="572"/>
    </location>
</feature>
<feature type="transmembrane region" description="Beta stranded" evidence="1">
    <location>
        <begin position="585"/>
        <end position="596"/>
    </location>
</feature>
<feature type="transmembrane region" description="Beta stranded" evidence="1">
    <location>
        <begin position="602"/>
        <end position="614"/>
    </location>
</feature>
<feature type="domain" description="TBDR plug" evidence="2">
    <location>
        <begin position="38"/>
        <end position="152"/>
    </location>
</feature>
<feature type="domain" description="TBDR beta-barrel" evidence="2">
    <location>
        <begin position="155"/>
        <end position="614"/>
    </location>
</feature>
<feature type="short sequence motif" description="TonB box">
    <location>
        <begin position="26"/>
        <end position="33"/>
    </location>
</feature>
<feature type="short sequence motif" description="TonB C-terminal box">
    <location>
        <begin position="597"/>
        <end position="614"/>
    </location>
</feature>
<feature type="binding site" evidence="1">
    <location>
        <position position="83"/>
    </location>
    <ligand>
        <name>cyanocob(III)alamin</name>
        <dbReference type="ChEBI" id="CHEBI:17439"/>
    </ligand>
</feature>
<feature type="binding site" evidence="1">
    <location>
        <position position="85"/>
    </location>
    <ligand>
        <name>cyanocob(III)alamin</name>
        <dbReference type="ChEBI" id="CHEBI:17439"/>
    </ligand>
</feature>
<feature type="binding site" evidence="1">
    <location>
        <position position="92"/>
    </location>
    <ligand>
        <name>cyanocob(III)alamin</name>
        <dbReference type="ChEBI" id="CHEBI:17439"/>
    </ligand>
</feature>
<feature type="binding site" evidence="1">
    <location>
        <begin position="110"/>
        <end position="111"/>
    </location>
    <ligand>
        <name>cyanocob(III)alamin</name>
        <dbReference type="ChEBI" id="CHEBI:17439"/>
    </ligand>
</feature>
<feature type="binding site" evidence="1">
    <location>
        <position position="199"/>
    </location>
    <ligand>
        <name>Ca(2+)</name>
        <dbReference type="ChEBI" id="CHEBI:29108"/>
        <label>1</label>
    </ligand>
</feature>
<feature type="binding site" evidence="1">
    <location>
        <position position="211"/>
    </location>
    <ligand>
        <name>Ca(2+)</name>
        <dbReference type="ChEBI" id="CHEBI:29108"/>
        <label>1</label>
    </ligand>
</feature>
<feature type="binding site" evidence="1">
    <location>
        <position position="213"/>
    </location>
    <ligand>
        <name>Ca(2+)</name>
        <dbReference type="ChEBI" id="CHEBI:29108"/>
        <label>1</label>
    </ligand>
</feature>
<feature type="binding site" evidence="1">
    <location>
        <position position="213"/>
    </location>
    <ligand>
        <name>Ca(2+)</name>
        <dbReference type="ChEBI" id="CHEBI:29108"/>
        <label>2</label>
    </ligand>
</feature>
<feature type="binding site" evidence="1">
    <location>
        <position position="215"/>
    </location>
    <ligand>
        <name>Ca(2+)</name>
        <dbReference type="ChEBI" id="CHEBI:29108"/>
        <label>1</label>
    </ligand>
</feature>
<feature type="binding site" evidence="1">
    <location>
        <position position="215"/>
    </location>
    <ligand>
        <name>Ca(2+)</name>
        <dbReference type="ChEBI" id="CHEBI:29108"/>
        <label>2</label>
    </ligand>
</feature>
<feature type="binding site" evidence="1">
    <location>
        <position position="249"/>
    </location>
    <ligand>
        <name>Ca(2+)</name>
        <dbReference type="ChEBI" id="CHEBI:29108"/>
        <label>2</label>
    </ligand>
</feature>
<feature type="binding site" evidence="1">
    <location>
        <position position="250"/>
    </location>
    <ligand>
        <name>Ca(2+)</name>
        <dbReference type="ChEBI" id="CHEBI:29108"/>
        <label>1</label>
    </ligand>
</feature>
<feature type="binding site" evidence="1">
    <location>
        <position position="250"/>
    </location>
    <ligand>
        <name>Ca(2+)</name>
        <dbReference type="ChEBI" id="CHEBI:29108"/>
        <label>2</label>
    </ligand>
</feature>
<feature type="binding site" evidence="1">
    <location>
        <position position="251"/>
    </location>
    <ligand>
        <name>cyanocob(III)alamin</name>
        <dbReference type="ChEBI" id="CHEBI:17439"/>
    </ligand>
</feature>
<feature type="binding site" evidence="1">
    <location>
        <position position="261"/>
    </location>
    <ligand>
        <name>Ca(2+)</name>
        <dbReference type="ChEBI" id="CHEBI:29108"/>
        <label>2</label>
    </ligand>
</feature>
<feature type="binding site" evidence="1">
    <location>
        <position position="309"/>
    </location>
    <ligand>
        <name>cyanocob(III)alamin</name>
        <dbReference type="ChEBI" id="CHEBI:17439"/>
    </ligand>
</feature>
<feature type="binding site" evidence="1">
    <location>
        <position position="517"/>
    </location>
    <ligand>
        <name>cyanocob(III)alamin</name>
        <dbReference type="ChEBI" id="CHEBI:17439"/>
    </ligand>
</feature>
<feature type="binding site" evidence="1">
    <location>
        <position position="551"/>
    </location>
    <ligand>
        <name>cyanocob(III)alamin</name>
        <dbReference type="ChEBI" id="CHEBI:17439"/>
    </ligand>
</feature>
<keyword id="KW-0106">Calcium</keyword>
<keyword id="KW-0998">Cell outer membrane</keyword>
<keyword id="KW-0406">Ion transport</keyword>
<keyword id="KW-0472">Membrane</keyword>
<keyword id="KW-0479">Metal-binding</keyword>
<keyword id="KW-0626">Porin</keyword>
<keyword id="KW-1185">Reference proteome</keyword>
<keyword id="KW-0732">Signal</keyword>
<keyword id="KW-0798">TonB box</keyword>
<keyword id="KW-0812">Transmembrane</keyword>
<keyword id="KW-1134">Transmembrane beta strand</keyword>
<keyword id="KW-0813">Transport</keyword>